<protein>
    <recommendedName>
        <fullName evidence="1">Large ribosomal subunit protein bL34</fullName>
    </recommendedName>
    <alternativeName>
        <fullName evidence="3">50S ribosomal protein L34</fullName>
    </alternativeName>
</protein>
<gene>
    <name evidence="1" type="primary">rpmH</name>
    <name type="ordered locus">PsycPRwf_0001</name>
</gene>
<name>RL34_PSYWF</name>
<keyword id="KW-0687">Ribonucleoprotein</keyword>
<keyword id="KW-0689">Ribosomal protein</keyword>
<evidence type="ECO:0000255" key="1">
    <source>
        <dbReference type="HAMAP-Rule" id="MF_00391"/>
    </source>
</evidence>
<evidence type="ECO:0000256" key="2">
    <source>
        <dbReference type="SAM" id="MobiDB-lite"/>
    </source>
</evidence>
<evidence type="ECO:0000305" key="3"/>
<sequence length="44" mass="5273">MKRTFQPSVIKRKRTHGFRARMATKKGRQVLARRRAKGRHRLTV</sequence>
<dbReference type="EMBL" id="CP000713">
    <property type="protein sequence ID" value="ABQ92961.1"/>
    <property type="molecule type" value="Genomic_DNA"/>
</dbReference>
<dbReference type="SMR" id="A5WBC0"/>
<dbReference type="KEGG" id="prw:PsycPRwf_0001"/>
<dbReference type="eggNOG" id="COG0230">
    <property type="taxonomic scope" value="Bacteria"/>
</dbReference>
<dbReference type="HOGENOM" id="CLU_129938_2_0_6"/>
<dbReference type="GO" id="GO:1990904">
    <property type="term" value="C:ribonucleoprotein complex"/>
    <property type="evidence" value="ECO:0007669"/>
    <property type="project" value="UniProtKB-KW"/>
</dbReference>
<dbReference type="GO" id="GO:0005840">
    <property type="term" value="C:ribosome"/>
    <property type="evidence" value="ECO:0007669"/>
    <property type="project" value="UniProtKB-KW"/>
</dbReference>
<dbReference type="GO" id="GO:0003735">
    <property type="term" value="F:structural constituent of ribosome"/>
    <property type="evidence" value="ECO:0007669"/>
    <property type="project" value="InterPro"/>
</dbReference>
<dbReference type="GO" id="GO:0006412">
    <property type="term" value="P:translation"/>
    <property type="evidence" value="ECO:0007669"/>
    <property type="project" value="UniProtKB-UniRule"/>
</dbReference>
<dbReference type="FunFam" id="1.10.287.3980:FF:000001">
    <property type="entry name" value="Mitochondrial ribosomal protein L34"/>
    <property type="match status" value="1"/>
</dbReference>
<dbReference type="Gene3D" id="1.10.287.3980">
    <property type="match status" value="1"/>
</dbReference>
<dbReference type="HAMAP" id="MF_00391">
    <property type="entry name" value="Ribosomal_bL34"/>
    <property type="match status" value="1"/>
</dbReference>
<dbReference type="InterPro" id="IPR000271">
    <property type="entry name" value="Ribosomal_bL34"/>
</dbReference>
<dbReference type="InterPro" id="IPR020939">
    <property type="entry name" value="Ribosomal_bL34_CS"/>
</dbReference>
<dbReference type="NCBIfam" id="TIGR01030">
    <property type="entry name" value="rpmH_bact"/>
    <property type="match status" value="1"/>
</dbReference>
<dbReference type="PANTHER" id="PTHR14503:SF4">
    <property type="entry name" value="LARGE RIBOSOMAL SUBUNIT PROTEIN BL34M"/>
    <property type="match status" value="1"/>
</dbReference>
<dbReference type="PANTHER" id="PTHR14503">
    <property type="entry name" value="MITOCHONDRIAL RIBOSOMAL PROTEIN 34 FAMILY MEMBER"/>
    <property type="match status" value="1"/>
</dbReference>
<dbReference type="Pfam" id="PF00468">
    <property type="entry name" value="Ribosomal_L34"/>
    <property type="match status" value="1"/>
</dbReference>
<dbReference type="PROSITE" id="PS00784">
    <property type="entry name" value="RIBOSOMAL_L34"/>
    <property type="match status" value="1"/>
</dbReference>
<reference key="1">
    <citation type="submission" date="2007-05" db="EMBL/GenBank/DDBJ databases">
        <title>Complete sequence of chromosome of Psychrobacter sp. PRwf-1.</title>
        <authorList>
            <consortium name="US DOE Joint Genome Institute"/>
            <person name="Copeland A."/>
            <person name="Lucas S."/>
            <person name="Lapidus A."/>
            <person name="Barry K."/>
            <person name="Detter J.C."/>
            <person name="Glavina del Rio T."/>
            <person name="Hammon N."/>
            <person name="Israni S."/>
            <person name="Dalin E."/>
            <person name="Tice H."/>
            <person name="Pitluck S."/>
            <person name="Chain P."/>
            <person name="Malfatti S."/>
            <person name="Shin M."/>
            <person name="Vergez L."/>
            <person name="Schmutz J."/>
            <person name="Larimer F."/>
            <person name="Land M."/>
            <person name="Hauser L."/>
            <person name="Kyrpides N."/>
            <person name="Kim E."/>
            <person name="Tiedje J."/>
            <person name="Richardson P."/>
        </authorList>
    </citation>
    <scope>NUCLEOTIDE SEQUENCE [LARGE SCALE GENOMIC DNA]</scope>
    <source>
        <strain>PRwf-1</strain>
    </source>
</reference>
<accession>A5WBC0</accession>
<comment type="similarity">
    <text evidence="1">Belongs to the bacterial ribosomal protein bL34 family.</text>
</comment>
<proteinExistence type="inferred from homology"/>
<organism>
    <name type="scientific">Psychrobacter sp. (strain PRwf-1)</name>
    <dbReference type="NCBI Taxonomy" id="349106"/>
    <lineage>
        <taxon>Bacteria</taxon>
        <taxon>Pseudomonadati</taxon>
        <taxon>Pseudomonadota</taxon>
        <taxon>Gammaproteobacteria</taxon>
        <taxon>Moraxellales</taxon>
        <taxon>Moraxellaceae</taxon>
        <taxon>Psychrobacter</taxon>
    </lineage>
</organism>
<feature type="chain" id="PRO_1000072220" description="Large ribosomal subunit protein bL34">
    <location>
        <begin position="1"/>
        <end position="44"/>
    </location>
</feature>
<feature type="region of interest" description="Disordered" evidence="2">
    <location>
        <begin position="22"/>
        <end position="44"/>
    </location>
</feature>